<comment type="function">
    <text evidence="1">Molecular chaperone. Has ATPase activity.</text>
</comment>
<comment type="subunit">
    <text evidence="1">Homodimer.</text>
</comment>
<comment type="subcellular location">
    <subcellularLocation>
        <location evidence="1">Cytoplasm</location>
    </subcellularLocation>
</comment>
<comment type="similarity">
    <text evidence="1">Belongs to the heat shock protein 90 family.</text>
</comment>
<comment type="sequence caution" evidence="2">
    <conflict type="erroneous initiation">
        <sequence resource="EMBL-CDS" id="AAO69964"/>
    </conflict>
</comment>
<comment type="sequence caution" evidence="2">
    <conflict type="erroneous initiation">
        <sequence resource="EMBL-CDS" id="CAD04972"/>
    </conflict>
</comment>
<feature type="chain" id="PRO_0000063012" description="Chaperone protein HtpG">
    <location>
        <begin position="1"/>
        <end position="624"/>
    </location>
</feature>
<feature type="region of interest" description="A; substrate-binding" evidence="1">
    <location>
        <begin position="1"/>
        <end position="336"/>
    </location>
</feature>
<feature type="region of interest" description="B" evidence="1">
    <location>
        <begin position="337"/>
        <end position="552"/>
    </location>
</feature>
<feature type="region of interest" description="C" evidence="1">
    <location>
        <begin position="553"/>
        <end position="624"/>
    </location>
</feature>
<name>HTPG_SALTI</name>
<keyword id="KW-0067">ATP-binding</keyword>
<keyword id="KW-0143">Chaperone</keyword>
<keyword id="KW-0963">Cytoplasm</keyword>
<keyword id="KW-0547">Nucleotide-binding</keyword>
<keyword id="KW-0346">Stress response</keyword>
<sequence>MKGQETRGFQSEVKQLLHLMIHSLYSNKEIFLRELISNASDAADKLRFRALSNPDLYEGDGELRVRVSFDKDKRTLTIADNGVGMNRDEVIDHLGTIAKSGTKSFLESMGSDQAKDSQLIGQFGVGFYSAFIVADKVTVRTRAAGDKPENGVFWESAGEGEYTVADITKNDRGTEITLHLREGEDEFLDDWRVRSIISKYSDHIALPVEIEKREEKDGETVISWEKINKAQALWTRNKSEIKDDEYNEFYKHIAHDFTDPLTWSHNRVEGKQEYTSLLYIPSQAPWDLWNRDHKHGLKLYVQRVFIMDDAEQFMPNYLRFVRGLIDSNDLPLNVSREILQDSTVTRNLRSALTKRVLQMLEKLAKDDAEKYQTFWKQFGLVLKEGPAEDHANQEAIAKLLRFASTHTDSSAQTVSLEDYVSRMKEGQEKIYYITADSYAAAKNSPHLELLRKKGIEVLLLSDRIDEWMMNYLTEFDGKAFQSVAKADESIEKLADEVDENAKEAEKALEPFVERVKTLLGDRVKEVRLTHRLTDTPAIVTTDADEMSTQMAKLFAAAGQSVPEVKYIFELNPDHVLVKRTADTKDEAQFKEWVELLLDQALFAERGTLEDPNQFIRRMNQLLVS</sequence>
<proteinExistence type="inferred from homology"/>
<organism>
    <name type="scientific">Salmonella typhi</name>
    <dbReference type="NCBI Taxonomy" id="90370"/>
    <lineage>
        <taxon>Bacteria</taxon>
        <taxon>Pseudomonadati</taxon>
        <taxon>Pseudomonadota</taxon>
        <taxon>Gammaproteobacteria</taxon>
        <taxon>Enterobacterales</taxon>
        <taxon>Enterobacteriaceae</taxon>
        <taxon>Salmonella</taxon>
    </lineage>
</organism>
<gene>
    <name evidence="1" type="primary">htpG</name>
    <name type="ordered locus">STY0531</name>
    <name type="ordered locus">t2373</name>
</gene>
<accession>P58479</accession>
<evidence type="ECO:0000255" key="1">
    <source>
        <dbReference type="HAMAP-Rule" id="MF_00505"/>
    </source>
</evidence>
<evidence type="ECO:0000305" key="2"/>
<reference key="1">
    <citation type="journal article" date="2001" name="Nature">
        <title>Complete genome sequence of a multiple drug resistant Salmonella enterica serovar Typhi CT18.</title>
        <authorList>
            <person name="Parkhill J."/>
            <person name="Dougan G."/>
            <person name="James K.D."/>
            <person name="Thomson N.R."/>
            <person name="Pickard D."/>
            <person name="Wain J."/>
            <person name="Churcher C.M."/>
            <person name="Mungall K.L."/>
            <person name="Bentley S.D."/>
            <person name="Holden M.T.G."/>
            <person name="Sebaihia M."/>
            <person name="Baker S."/>
            <person name="Basham D."/>
            <person name="Brooks K."/>
            <person name="Chillingworth T."/>
            <person name="Connerton P."/>
            <person name="Cronin A."/>
            <person name="Davis P."/>
            <person name="Davies R.M."/>
            <person name="Dowd L."/>
            <person name="White N."/>
            <person name="Farrar J."/>
            <person name="Feltwell T."/>
            <person name="Hamlin N."/>
            <person name="Haque A."/>
            <person name="Hien T.T."/>
            <person name="Holroyd S."/>
            <person name="Jagels K."/>
            <person name="Krogh A."/>
            <person name="Larsen T.S."/>
            <person name="Leather S."/>
            <person name="Moule S."/>
            <person name="O'Gaora P."/>
            <person name="Parry C."/>
            <person name="Quail M.A."/>
            <person name="Rutherford K.M."/>
            <person name="Simmonds M."/>
            <person name="Skelton J."/>
            <person name="Stevens K."/>
            <person name="Whitehead S."/>
            <person name="Barrell B.G."/>
        </authorList>
    </citation>
    <scope>NUCLEOTIDE SEQUENCE [LARGE SCALE GENOMIC DNA]</scope>
    <source>
        <strain>CT18</strain>
    </source>
</reference>
<reference key="2">
    <citation type="journal article" date="2003" name="J. Bacteriol.">
        <title>Comparative genomics of Salmonella enterica serovar Typhi strains Ty2 and CT18.</title>
        <authorList>
            <person name="Deng W."/>
            <person name="Liou S.-R."/>
            <person name="Plunkett G. III"/>
            <person name="Mayhew G.F."/>
            <person name="Rose D.J."/>
            <person name="Burland V."/>
            <person name="Kodoyianni V."/>
            <person name="Schwartz D.C."/>
            <person name="Blattner F.R."/>
        </authorList>
    </citation>
    <scope>NUCLEOTIDE SEQUENCE [LARGE SCALE GENOMIC DNA]</scope>
    <source>
        <strain>ATCC 700931 / Ty2</strain>
    </source>
</reference>
<protein>
    <recommendedName>
        <fullName evidence="1">Chaperone protein HtpG</fullName>
    </recommendedName>
    <alternativeName>
        <fullName evidence="1">Heat shock protein HtpG</fullName>
    </alternativeName>
    <alternativeName>
        <fullName evidence="1">High temperature protein G</fullName>
    </alternativeName>
</protein>
<dbReference type="EMBL" id="AL513382">
    <property type="protein sequence ID" value="CAD04972.1"/>
    <property type="status" value="ALT_INIT"/>
    <property type="molecule type" value="Genomic_DNA"/>
</dbReference>
<dbReference type="EMBL" id="AE014613">
    <property type="protein sequence ID" value="AAO69964.1"/>
    <property type="status" value="ALT_INIT"/>
    <property type="molecule type" value="Genomic_DNA"/>
</dbReference>
<dbReference type="PIR" id="AB0563">
    <property type="entry name" value="AB0563"/>
</dbReference>
<dbReference type="RefSeq" id="NP_455083.1">
    <property type="nucleotide sequence ID" value="NC_003198.1"/>
</dbReference>
<dbReference type="SMR" id="P58479"/>
<dbReference type="STRING" id="220341.gene:17584552"/>
<dbReference type="KEGG" id="stt:t2373"/>
<dbReference type="KEGG" id="sty:STY0531"/>
<dbReference type="PATRIC" id="fig|220341.7.peg.533"/>
<dbReference type="eggNOG" id="COG0326">
    <property type="taxonomic scope" value="Bacteria"/>
</dbReference>
<dbReference type="HOGENOM" id="CLU_006684_3_0_6"/>
<dbReference type="OMA" id="MRRMKEM"/>
<dbReference type="OrthoDB" id="9802640at2"/>
<dbReference type="Proteomes" id="UP000000541">
    <property type="component" value="Chromosome"/>
</dbReference>
<dbReference type="Proteomes" id="UP000002670">
    <property type="component" value="Chromosome"/>
</dbReference>
<dbReference type="GO" id="GO:0005737">
    <property type="term" value="C:cytoplasm"/>
    <property type="evidence" value="ECO:0007669"/>
    <property type="project" value="UniProtKB-SubCell"/>
</dbReference>
<dbReference type="GO" id="GO:0005524">
    <property type="term" value="F:ATP binding"/>
    <property type="evidence" value="ECO:0007669"/>
    <property type="project" value="UniProtKB-UniRule"/>
</dbReference>
<dbReference type="GO" id="GO:0016887">
    <property type="term" value="F:ATP hydrolysis activity"/>
    <property type="evidence" value="ECO:0007669"/>
    <property type="project" value="InterPro"/>
</dbReference>
<dbReference type="GO" id="GO:0140662">
    <property type="term" value="F:ATP-dependent protein folding chaperone"/>
    <property type="evidence" value="ECO:0007669"/>
    <property type="project" value="InterPro"/>
</dbReference>
<dbReference type="GO" id="GO:0051082">
    <property type="term" value="F:unfolded protein binding"/>
    <property type="evidence" value="ECO:0007669"/>
    <property type="project" value="UniProtKB-UniRule"/>
</dbReference>
<dbReference type="CDD" id="cd16927">
    <property type="entry name" value="HATPase_Hsp90-like"/>
    <property type="match status" value="1"/>
</dbReference>
<dbReference type="FunFam" id="1.20.120.790:FF:000002">
    <property type="entry name" value="Molecular chaperone HtpG"/>
    <property type="match status" value="1"/>
</dbReference>
<dbReference type="FunFam" id="3.30.230.80:FF:000002">
    <property type="entry name" value="Molecular chaperone HtpG"/>
    <property type="match status" value="1"/>
</dbReference>
<dbReference type="FunFam" id="3.30.565.10:FF:000009">
    <property type="entry name" value="Molecular chaperone HtpG"/>
    <property type="match status" value="1"/>
</dbReference>
<dbReference type="FunFam" id="3.40.50.11260:FF:000002">
    <property type="entry name" value="Molecular chaperone HtpG"/>
    <property type="match status" value="1"/>
</dbReference>
<dbReference type="Gene3D" id="3.30.230.80">
    <property type="match status" value="1"/>
</dbReference>
<dbReference type="Gene3D" id="3.40.50.11260">
    <property type="match status" value="1"/>
</dbReference>
<dbReference type="Gene3D" id="1.20.120.790">
    <property type="entry name" value="Heat shock protein 90, C-terminal domain"/>
    <property type="match status" value="1"/>
</dbReference>
<dbReference type="Gene3D" id="3.30.565.10">
    <property type="entry name" value="Histidine kinase-like ATPase, C-terminal domain"/>
    <property type="match status" value="1"/>
</dbReference>
<dbReference type="HAMAP" id="MF_00505">
    <property type="entry name" value="HSP90"/>
    <property type="match status" value="1"/>
</dbReference>
<dbReference type="InterPro" id="IPR036890">
    <property type="entry name" value="HATPase_C_sf"/>
</dbReference>
<dbReference type="InterPro" id="IPR019805">
    <property type="entry name" value="Heat_shock_protein_90_CS"/>
</dbReference>
<dbReference type="InterPro" id="IPR037196">
    <property type="entry name" value="HSP90_C"/>
</dbReference>
<dbReference type="InterPro" id="IPR001404">
    <property type="entry name" value="Hsp90_fam"/>
</dbReference>
<dbReference type="InterPro" id="IPR020575">
    <property type="entry name" value="Hsp90_N"/>
</dbReference>
<dbReference type="InterPro" id="IPR020568">
    <property type="entry name" value="Ribosomal_Su5_D2-typ_SF"/>
</dbReference>
<dbReference type="NCBIfam" id="NF003555">
    <property type="entry name" value="PRK05218.1"/>
    <property type="match status" value="1"/>
</dbReference>
<dbReference type="PANTHER" id="PTHR11528">
    <property type="entry name" value="HEAT SHOCK PROTEIN 90 FAMILY MEMBER"/>
    <property type="match status" value="1"/>
</dbReference>
<dbReference type="Pfam" id="PF13589">
    <property type="entry name" value="HATPase_c_3"/>
    <property type="match status" value="1"/>
</dbReference>
<dbReference type="Pfam" id="PF00183">
    <property type="entry name" value="HSP90"/>
    <property type="match status" value="1"/>
</dbReference>
<dbReference type="PIRSF" id="PIRSF002583">
    <property type="entry name" value="Hsp90"/>
    <property type="match status" value="1"/>
</dbReference>
<dbReference type="PRINTS" id="PR00775">
    <property type="entry name" value="HEATSHOCK90"/>
</dbReference>
<dbReference type="SMART" id="SM00387">
    <property type="entry name" value="HATPase_c"/>
    <property type="match status" value="1"/>
</dbReference>
<dbReference type="SUPFAM" id="SSF55874">
    <property type="entry name" value="ATPase domain of HSP90 chaperone/DNA topoisomerase II/histidine kinase"/>
    <property type="match status" value="1"/>
</dbReference>
<dbReference type="SUPFAM" id="SSF110942">
    <property type="entry name" value="HSP90 C-terminal domain"/>
    <property type="match status" value="1"/>
</dbReference>
<dbReference type="SUPFAM" id="SSF54211">
    <property type="entry name" value="Ribosomal protein S5 domain 2-like"/>
    <property type="match status" value="1"/>
</dbReference>
<dbReference type="PROSITE" id="PS00298">
    <property type="entry name" value="HSP90"/>
    <property type="match status" value="1"/>
</dbReference>